<name>RNC_RICBR</name>
<evidence type="ECO:0000255" key="1">
    <source>
        <dbReference type="HAMAP-Rule" id="MF_00104"/>
    </source>
</evidence>
<keyword id="KW-0963">Cytoplasm</keyword>
<keyword id="KW-0255">Endonuclease</keyword>
<keyword id="KW-0378">Hydrolase</keyword>
<keyword id="KW-0460">Magnesium</keyword>
<keyword id="KW-0479">Metal-binding</keyword>
<keyword id="KW-0507">mRNA processing</keyword>
<keyword id="KW-0540">Nuclease</keyword>
<keyword id="KW-0694">RNA-binding</keyword>
<keyword id="KW-0698">rRNA processing</keyword>
<keyword id="KW-0699">rRNA-binding</keyword>
<keyword id="KW-0819">tRNA processing</keyword>
<comment type="function">
    <text evidence="1">Digests double-stranded RNA. Involved in the processing of primary rRNA transcript to yield the immediate precursors to the large and small rRNAs (23S and 16S). Processes some mRNAs, and tRNAs when they are encoded in the rRNA operon. Processes pre-crRNA and tracrRNA of type II CRISPR loci if present in the organism.</text>
</comment>
<comment type="catalytic activity">
    <reaction evidence="1">
        <text>Endonucleolytic cleavage to 5'-phosphomonoester.</text>
        <dbReference type="EC" id="3.1.26.3"/>
    </reaction>
</comment>
<comment type="cofactor">
    <cofactor evidence="1">
        <name>Mg(2+)</name>
        <dbReference type="ChEBI" id="CHEBI:18420"/>
    </cofactor>
</comment>
<comment type="subunit">
    <text evidence="1">Homodimer.</text>
</comment>
<comment type="subcellular location">
    <subcellularLocation>
        <location evidence="1">Cytoplasm</location>
    </subcellularLocation>
</comment>
<comment type="similarity">
    <text evidence="1">Belongs to the ribonuclease III family.</text>
</comment>
<organism>
    <name type="scientific">Rickettsia bellii (strain RML369-C)</name>
    <dbReference type="NCBI Taxonomy" id="336407"/>
    <lineage>
        <taxon>Bacteria</taxon>
        <taxon>Pseudomonadati</taxon>
        <taxon>Pseudomonadota</taxon>
        <taxon>Alphaproteobacteria</taxon>
        <taxon>Rickettsiales</taxon>
        <taxon>Rickettsiaceae</taxon>
        <taxon>Rickettsieae</taxon>
        <taxon>Rickettsia</taxon>
        <taxon>belli group</taxon>
    </lineage>
</organism>
<proteinExistence type="inferred from homology"/>
<gene>
    <name evidence="1" type="primary">rnc</name>
    <name type="ordered locus">RBE_1181</name>
</gene>
<sequence>MESFEELEKLLDYSFKNKALLTEALSHPSLRQHHEYKANKDYERLEFLGDAVLNLIITEILFNNFKEYNEGNLAKIRSYLVCKETICVVGAKLGLKNYIIMTHGEEIAGGRDNPNNIENVTEALIAAIYLDSDITTIHNIIGKLWAEFIKVKDLTDYDPKTALQEWAQSKDHHIPIYRLIKREGVAHLSTFTVSVKINGYEQTGKGHSIKEAEKNAARELLHKLKLL</sequence>
<dbReference type="EC" id="3.1.26.3" evidence="1"/>
<dbReference type="EMBL" id="CP000087">
    <property type="protein sequence ID" value="ABE05262.1"/>
    <property type="molecule type" value="Genomic_DNA"/>
</dbReference>
<dbReference type="RefSeq" id="WP_011477840.1">
    <property type="nucleotide sequence ID" value="NC_007940.1"/>
</dbReference>
<dbReference type="SMR" id="Q1RHA2"/>
<dbReference type="KEGG" id="rbe:RBE_1181"/>
<dbReference type="eggNOG" id="COG0571">
    <property type="taxonomic scope" value="Bacteria"/>
</dbReference>
<dbReference type="HOGENOM" id="CLU_000907_1_1_5"/>
<dbReference type="OrthoDB" id="9805026at2"/>
<dbReference type="Proteomes" id="UP000001951">
    <property type="component" value="Chromosome"/>
</dbReference>
<dbReference type="GO" id="GO:0005737">
    <property type="term" value="C:cytoplasm"/>
    <property type="evidence" value="ECO:0007669"/>
    <property type="project" value="UniProtKB-SubCell"/>
</dbReference>
<dbReference type="GO" id="GO:0003725">
    <property type="term" value="F:double-stranded RNA binding"/>
    <property type="evidence" value="ECO:0007669"/>
    <property type="project" value="TreeGrafter"/>
</dbReference>
<dbReference type="GO" id="GO:0046872">
    <property type="term" value="F:metal ion binding"/>
    <property type="evidence" value="ECO:0007669"/>
    <property type="project" value="UniProtKB-KW"/>
</dbReference>
<dbReference type="GO" id="GO:0004525">
    <property type="term" value="F:ribonuclease III activity"/>
    <property type="evidence" value="ECO:0007669"/>
    <property type="project" value="UniProtKB-UniRule"/>
</dbReference>
<dbReference type="GO" id="GO:0019843">
    <property type="term" value="F:rRNA binding"/>
    <property type="evidence" value="ECO:0007669"/>
    <property type="project" value="UniProtKB-KW"/>
</dbReference>
<dbReference type="GO" id="GO:0006397">
    <property type="term" value="P:mRNA processing"/>
    <property type="evidence" value="ECO:0007669"/>
    <property type="project" value="UniProtKB-UniRule"/>
</dbReference>
<dbReference type="GO" id="GO:0010468">
    <property type="term" value="P:regulation of gene expression"/>
    <property type="evidence" value="ECO:0007669"/>
    <property type="project" value="TreeGrafter"/>
</dbReference>
<dbReference type="GO" id="GO:0006364">
    <property type="term" value="P:rRNA processing"/>
    <property type="evidence" value="ECO:0007669"/>
    <property type="project" value="UniProtKB-UniRule"/>
</dbReference>
<dbReference type="GO" id="GO:0008033">
    <property type="term" value="P:tRNA processing"/>
    <property type="evidence" value="ECO:0007669"/>
    <property type="project" value="UniProtKB-KW"/>
</dbReference>
<dbReference type="CDD" id="cd10845">
    <property type="entry name" value="DSRM_RNAse_III_family"/>
    <property type="match status" value="1"/>
</dbReference>
<dbReference type="CDD" id="cd00593">
    <property type="entry name" value="RIBOc"/>
    <property type="match status" value="1"/>
</dbReference>
<dbReference type="FunFam" id="1.10.1520.10:FF:000001">
    <property type="entry name" value="Ribonuclease 3"/>
    <property type="match status" value="1"/>
</dbReference>
<dbReference type="Gene3D" id="3.30.160.20">
    <property type="match status" value="1"/>
</dbReference>
<dbReference type="Gene3D" id="1.10.1520.10">
    <property type="entry name" value="Ribonuclease III domain"/>
    <property type="match status" value="1"/>
</dbReference>
<dbReference type="HAMAP" id="MF_00104">
    <property type="entry name" value="RNase_III"/>
    <property type="match status" value="1"/>
</dbReference>
<dbReference type="InterPro" id="IPR014720">
    <property type="entry name" value="dsRBD_dom"/>
</dbReference>
<dbReference type="InterPro" id="IPR011907">
    <property type="entry name" value="RNase_III"/>
</dbReference>
<dbReference type="InterPro" id="IPR000999">
    <property type="entry name" value="RNase_III_dom"/>
</dbReference>
<dbReference type="InterPro" id="IPR036389">
    <property type="entry name" value="RNase_III_sf"/>
</dbReference>
<dbReference type="NCBIfam" id="TIGR02191">
    <property type="entry name" value="RNaseIII"/>
    <property type="match status" value="1"/>
</dbReference>
<dbReference type="PANTHER" id="PTHR11207:SF0">
    <property type="entry name" value="RIBONUCLEASE 3"/>
    <property type="match status" value="1"/>
</dbReference>
<dbReference type="PANTHER" id="PTHR11207">
    <property type="entry name" value="RIBONUCLEASE III"/>
    <property type="match status" value="1"/>
</dbReference>
<dbReference type="Pfam" id="PF00035">
    <property type="entry name" value="dsrm"/>
    <property type="match status" value="1"/>
</dbReference>
<dbReference type="Pfam" id="PF14622">
    <property type="entry name" value="Ribonucleas_3_3"/>
    <property type="match status" value="1"/>
</dbReference>
<dbReference type="SMART" id="SM00358">
    <property type="entry name" value="DSRM"/>
    <property type="match status" value="1"/>
</dbReference>
<dbReference type="SMART" id="SM00535">
    <property type="entry name" value="RIBOc"/>
    <property type="match status" value="1"/>
</dbReference>
<dbReference type="SUPFAM" id="SSF54768">
    <property type="entry name" value="dsRNA-binding domain-like"/>
    <property type="match status" value="1"/>
</dbReference>
<dbReference type="SUPFAM" id="SSF69065">
    <property type="entry name" value="RNase III domain-like"/>
    <property type="match status" value="1"/>
</dbReference>
<dbReference type="PROSITE" id="PS50137">
    <property type="entry name" value="DS_RBD"/>
    <property type="match status" value="1"/>
</dbReference>
<dbReference type="PROSITE" id="PS00517">
    <property type="entry name" value="RNASE_3_1"/>
    <property type="match status" value="1"/>
</dbReference>
<dbReference type="PROSITE" id="PS50142">
    <property type="entry name" value="RNASE_3_2"/>
    <property type="match status" value="1"/>
</dbReference>
<reference key="1">
    <citation type="journal article" date="2006" name="PLoS Genet.">
        <title>Genome sequence of Rickettsia bellii illuminates the role of amoebae in gene exchanges between intracellular pathogens.</title>
        <authorList>
            <person name="Ogata H."/>
            <person name="La Scola B."/>
            <person name="Audic S."/>
            <person name="Renesto P."/>
            <person name="Blanc G."/>
            <person name="Robert C."/>
            <person name="Fournier P.-E."/>
            <person name="Claverie J.-M."/>
            <person name="Raoult D."/>
        </authorList>
    </citation>
    <scope>NUCLEOTIDE SEQUENCE [LARGE SCALE GENOMIC DNA]</scope>
    <source>
        <strain>RML369-C</strain>
    </source>
</reference>
<accession>Q1RHA2</accession>
<feature type="chain" id="PRO_0000277903" description="Ribonuclease 3">
    <location>
        <begin position="1"/>
        <end position="227"/>
    </location>
</feature>
<feature type="domain" description="RNase III" evidence="1">
    <location>
        <begin position="4"/>
        <end position="133"/>
    </location>
</feature>
<feature type="domain" description="DRBM" evidence="1">
    <location>
        <begin position="158"/>
        <end position="226"/>
    </location>
</feature>
<feature type="active site" evidence="1">
    <location>
        <position position="50"/>
    </location>
</feature>
<feature type="active site" evidence="1">
    <location>
        <position position="122"/>
    </location>
</feature>
<feature type="binding site" evidence="1">
    <location>
        <position position="46"/>
    </location>
    <ligand>
        <name>Mg(2+)</name>
        <dbReference type="ChEBI" id="CHEBI:18420"/>
    </ligand>
</feature>
<feature type="binding site" evidence="1">
    <location>
        <position position="119"/>
    </location>
    <ligand>
        <name>Mg(2+)</name>
        <dbReference type="ChEBI" id="CHEBI:18420"/>
    </ligand>
</feature>
<feature type="binding site" evidence="1">
    <location>
        <position position="122"/>
    </location>
    <ligand>
        <name>Mg(2+)</name>
        <dbReference type="ChEBI" id="CHEBI:18420"/>
    </ligand>
</feature>
<protein>
    <recommendedName>
        <fullName evidence="1">Ribonuclease 3</fullName>
        <ecNumber evidence="1">3.1.26.3</ecNumber>
    </recommendedName>
    <alternativeName>
        <fullName evidence="1">Ribonuclease III</fullName>
        <shortName evidence="1">RNase III</shortName>
    </alternativeName>
</protein>